<proteinExistence type="inferred from homology"/>
<gene>
    <name evidence="1" type="primary">ureG</name>
    <name type="ordered locus">mll4934</name>
</gene>
<comment type="function">
    <text evidence="1">Facilitates the functional incorporation of the urease nickel metallocenter. This process requires GTP hydrolysis, probably effectuated by UreG.</text>
</comment>
<comment type="subunit">
    <text evidence="1">Homodimer. UreD, UreF and UreG form a complex that acts as a GTP-hydrolysis-dependent molecular chaperone, activating the urease apoprotein by helping to assemble the nickel containing metallocenter of UreC. The UreE protein probably delivers the nickel.</text>
</comment>
<comment type="subcellular location">
    <subcellularLocation>
        <location evidence="1">Cytoplasm</location>
    </subcellularLocation>
</comment>
<comment type="similarity">
    <text evidence="1">Belongs to the SIMIBI class G3E GTPase family. UreG subfamily.</text>
</comment>
<feature type="chain" id="PRO_1000145212" description="Urease accessory protein UreG">
    <location>
        <begin position="1"/>
        <end position="213"/>
    </location>
</feature>
<feature type="binding site" evidence="1">
    <location>
        <begin position="14"/>
        <end position="21"/>
    </location>
    <ligand>
        <name>GTP</name>
        <dbReference type="ChEBI" id="CHEBI:37565"/>
    </ligand>
</feature>
<organism>
    <name type="scientific">Mesorhizobium japonicum (strain LMG 29417 / CECT 9101 / MAFF 303099)</name>
    <name type="common">Mesorhizobium loti (strain MAFF 303099)</name>
    <dbReference type="NCBI Taxonomy" id="266835"/>
    <lineage>
        <taxon>Bacteria</taxon>
        <taxon>Pseudomonadati</taxon>
        <taxon>Pseudomonadota</taxon>
        <taxon>Alphaproteobacteria</taxon>
        <taxon>Hyphomicrobiales</taxon>
        <taxon>Phyllobacteriaceae</taxon>
        <taxon>Mesorhizobium</taxon>
    </lineage>
</organism>
<keyword id="KW-0143">Chaperone</keyword>
<keyword id="KW-0963">Cytoplasm</keyword>
<keyword id="KW-0342">GTP-binding</keyword>
<keyword id="KW-0996">Nickel insertion</keyword>
<keyword id="KW-0547">Nucleotide-binding</keyword>
<dbReference type="EMBL" id="BA000012">
    <property type="protein sequence ID" value="BAB51476.1"/>
    <property type="molecule type" value="Genomic_DNA"/>
</dbReference>
<dbReference type="RefSeq" id="WP_010912817.1">
    <property type="nucleotide sequence ID" value="NC_002678.2"/>
</dbReference>
<dbReference type="SMR" id="Q98CZ5"/>
<dbReference type="GeneID" id="66680822"/>
<dbReference type="KEGG" id="mlo:mll4934"/>
<dbReference type="eggNOG" id="COG0378">
    <property type="taxonomic scope" value="Bacteria"/>
</dbReference>
<dbReference type="HOGENOM" id="CLU_072144_1_0_5"/>
<dbReference type="Proteomes" id="UP000000552">
    <property type="component" value="Chromosome"/>
</dbReference>
<dbReference type="GO" id="GO:0005737">
    <property type="term" value="C:cytoplasm"/>
    <property type="evidence" value="ECO:0007669"/>
    <property type="project" value="UniProtKB-SubCell"/>
</dbReference>
<dbReference type="GO" id="GO:0016887">
    <property type="term" value="F:ATP hydrolysis activity"/>
    <property type="evidence" value="ECO:0007669"/>
    <property type="project" value="InterPro"/>
</dbReference>
<dbReference type="GO" id="GO:0005525">
    <property type="term" value="F:GTP binding"/>
    <property type="evidence" value="ECO:0007669"/>
    <property type="project" value="UniProtKB-KW"/>
</dbReference>
<dbReference type="GO" id="GO:0003924">
    <property type="term" value="F:GTPase activity"/>
    <property type="evidence" value="ECO:0007669"/>
    <property type="project" value="InterPro"/>
</dbReference>
<dbReference type="GO" id="GO:0016151">
    <property type="term" value="F:nickel cation binding"/>
    <property type="evidence" value="ECO:0007669"/>
    <property type="project" value="UniProtKB-UniRule"/>
</dbReference>
<dbReference type="GO" id="GO:0043419">
    <property type="term" value="P:urea catabolic process"/>
    <property type="evidence" value="ECO:0007669"/>
    <property type="project" value="InterPro"/>
</dbReference>
<dbReference type="CDD" id="cd05540">
    <property type="entry name" value="UreG"/>
    <property type="match status" value="1"/>
</dbReference>
<dbReference type="Gene3D" id="3.40.50.300">
    <property type="entry name" value="P-loop containing nucleotide triphosphate hydrolases"/>
    <property type="match status" value="1"/>
</dbReference>
<dbReference type="HAMAP" id="MF_01389">
    <property type="entry name" value="UreG"/>
    <property type="match status" value="1"/>
</dbReference>
<dbReference type="InterPro" id="IPR003593">
    <property type="entry name" value="AAA+_ATPase"/>
</dbReference>
<dbReference type="InterPro" id="IPR003495">
    <property type="entry name" value="CobW/HypB/UreG_nucleotide-bd"/>
</dbReference>
<dbReference type="InterPro" id="IPR027417">
    <property type="entry name" value="P-loop_NTPase"/>
</dbReference>
<dbReference type="InterPro" id="IPR004400">
    <property type="entry name" value="UreG"/>
</dbReference>
<dbReference type="NCBIfam" id="TIGR00101">
    <property type="entry name" value="ureG"/>
    <property type="match status" value="1"/>
</dbReference>
<dbReference type="PANTHER" id="PTHR31715">
    <property type="entry name" value="UREASE ACCESSORY PROTEIN G"/>
    <property type="match status" value="1"/>
</dbReference>
<dbReference type="PANTHER" id="PTHR31715:SF0">
    <property type="entry name" value="UREASE ACCESSORY PROTEIN G"/>
    <property type="match status" value="1"/>
</dbReference>
<dbReference type="Pfam" id="PF02492">
    <property type="entry name" value="cobW"/>
    <property type="match status" value="1"/>
</dbReference>
<dbReference type="PIRSF" id="PIRSF005624">
    <property type="entry name" value="Ni-bind_GTPase"/>
    <property type="match status" value="1"/>
</dbReference>
<dbReference type="SMART" id="SM00382">
    <property type="entry name" value="AAA"/>
    <property type="match status" value="1"/>
</dbReference>
<dbReference type="SUPFAM" id="SSF52540">
    <property type="entry name" value="P-loop containing nucleoside triphosphate hydrolases"/>
    <property type="match status" value="1"/>
</dbReference>
<sequence length="213" mass="22892">MTQANGPLRIGIGGPVGSGKTTLTEKLCKALRDEFSIAVVTNDIYTREDAMMLARLQALPEDRIVGVETGGCPHTAIREDASINLQAIAELNRKFPDLDIIFIESGGDNLAATFSPDLADLTLYVISVCQGEEIPRKGGPAITRSDFLIINKSDLAPYVNVNLDVMESDAARMRGKRPFGFTDLSRGKGLREVIDFIVEHGGLRVGTATSTAA</sequence>
<evidence type="ECO:0000255" key="1">
    <source>
        <dbReference type="HAMAP-Rule" id="MF_01389"/>
    </source>
</evidence>
<accession>Q98CZ5</accession>
<name>UREG_RHILO</name>
<reference key="1">
    <citation type="journal article" date="2000" name="DNA Res.">
        <title>Complete genome structure of the nitrogen-fixing symbiotic bacterium Mesorhizobium loti.</title>
        <authorList>
            <person name="Kaneko T."/>
            <person name="Nakamura Y."/>
            <person name="Sato S."/>
            <person name="Asamizu E."/>
            <person name="Kato T."/>
            <person name="Sasamoto S."/>
            <person name="Watanabe A."/>
            <person name="Idesawa K."/>
            <person name="Ishikawa A."/>
            <person name="Kawashima K."/>
            <person name="Kimura T."/>
            <person name="Kishida Y."/>
            <person name="Kiyokawa C."/>
            <person name="Kohara M."/>
            <person name="Matsumoto M."/>
            <person name="Matsuno A."/>
            <person name="Mochizuki Y."/>
            <person name="Nakayama S."/>
            <person name="Nakazaki N."/>
            <person name="Shimpo S."/>
            <person name="Sugimoto M."/>
            <person name="Takeuchi C."/>
            <person name="Yamada M."/>
            <person name="Tabata S."/>
        </authorList>
    </citation>
    <scope>NUCLEOTIDE SEQUENCE [LARGE SCALE GENOMIC DNA]</scope>
    <source>
        <strain>LMG 29417 / CECT 9101 / MAFF 303099</strain>
    </source>
</reference>
<protein>
    <recommendedName>
        <fullName evidence="1">Urease accessory protein UreG</fullName>
    </recommendedName>
</protein>